<evidence type="ECO:0000255" key="1"/>
<evidence type="ECO:0000269" key="2">
    <source>
    </source>
</evidence>
<evidence type="ECO:0000269" key="3">
    <source>
    </source>
</evidence>
<evidence type="ECO:0000303" key="4">
    <source>
    </source>
</evidence>
<evidence type="ECO:0000305" key="5"/>
<evidence type="ECO:0007744" key="6">
    <source>
    </source>
</evidence>
<organism>
    <name type="scientific">Homo sapiens</name>
    <name type="common">Human</name>
    <dbReference type="NCBI Taxonomy" id="9606"/>
    <lineage>
        <taxon>Eukaryota</taxon>
        <taxon>Metazoa</taxon>
        <taxon>Chordata</taxon>
        <taxon>Craniata</taxon>
        <taxon>Vertebrata</taxon>
        <taxon>Euteleostomi</taxon>
        <taxon>Mammalia</taxon>
        <taxon>Eutheria</taxon>
        <taxon>Euarchontoglires</taxon>
        <taxon>Primates</taxon>
        <taxon>Haplorrhini</taxon>
        <taxon>Catarrhini</taxon>
        <taxon>Hominidae</taxon>
        <taxon>Homo</taxon>
    </lineage>
</organism>
<comment type="subunit">
    <text evidence="2">Interacts with DLG1 and DLG4. May form a complex with DLG1 and ERBIN, where interaction between LRRC1 and ERBIN is indirect.</text>
</comment>
<comment type="subcellular location">
    <subcellularLocation>
        <location evidence="2">Cytoplasm</location>
    </subcellularLocation>
    <subcellularLocation>
        <location evidence="2">Membrane</location>
        <topology evidence="2">Peripheral membrane protein</topology>
    </subcellularLocation>
    <text>Localized at the basolateral side of epithelial cells.</text>
</comment>
<comment type="alternative products">
    <event type="alternative splicing"/>
    <isoform>
        <id>Q9BTT6-1</id>
        <name>1</name>
        <sequence type="displayed"/>
    </isoform>
    <isoform>
        <id>Q9BTT6-2</id>
        <name>2</name>
        <sequence type="described" ref="VSP_010912 VSP_010913"/>
    </isoform>
</comment>
<comment type="tissue specificity">
    <text evidence="2">Expressed strongly in testis and placenta, followed by heart, lung, kidney, thyroid, trachea, colon, prostate and pancreas.</text>
</comment>
<comment type="sequence caution" evidence="5">
    <conflict type="frameshift">
        <sequence resource="EMBL-CDS" id="BAA91801"/>
    </conflict>
</comment>
<reference key="1">
    <citation type="journal article" date="2001" name="J. Biol. Chem.">
        <title>Lano, a novel LAP protein directly connected to MAGUK proteins in epithelial cells.</title>
        <authorList>
            <person name="Saito H."/>
            <person name="Santoni M.-J."/>
            <person name="Arsanto J.-P."/>
            <person name="Jaulin-Bastard F."/>
            <person name="Le Bivic A."/>
            <person name="Marchetto S."/>
            <person name="Audebert S."/>
            <person name="Isnardon D."/>
            <person name="Adelaide J."/>
            <person name="Birnbaum D."/>
            <person name="Borg J.-P."/>
        </authorList>
    </citation>
    <scope>NUCLEOTIDE SEQUENCE [MRNA] (ISOFORM 1)</scope>
    <scope>TISSUE SPECIFICITY</scope>
    <scope>SUBCELLULAR LOCATION</scope>
    <scope>INTERACTION WITH DLG1 AND DLG4</scope>
    <scope>COMPONENT OF A COMPLEX WITH DLG1 AND ERBBIP2</scope>
</reference>
<reference key="2">
    <citation type="journal article" date="2002" name="Epilepsy Res.">
        <title>Identification and mutational analysis of candidate genes for juvenile myoclonic epilepsy on 6p11-p12: LRRC1, GCLC, KIAA0057 and CLIC5.</title>
        <authorList>
            <person name="Suzuki T."/>
            <person name="Morita R."/>
            <person name="Sugimoto Y."/>
            <person name="Sugawara T."/>
            <person name="Bai D.S."/>
            <person name="Alonso M.E."/>
            <person name="Medina M.T."/>
            <person name="Bailey J.N."/>
            <person name="Rasmussen A."/>
            <person name="Ramos-Peek J."/>
            <person name="Cordova S."/>
            <person name="Rubio-Donnadieu F."/>
            <person name="Ochoa A."/>
            <person name="Jara-Prado A."/>
            <person name="Inazawa J."/>
            <person name="Delgado-Escueta A.V."/>
            <person name="Yamakawa K."/>
        </authorList>
    </citation>
    <scope>NUCLEOTIDE SEQUENCE [MRNA] (ISOFORM 1)</scope>
    <scope>VARIANT VAL-193</scope>
</reference>
<reference key="3">
    <citation type="journal article" date="2004" name="Nat. Genet.">
        <title>Complete sequencing and characterization of 21,243 full-length human cDNAs.</title>
        <authorList>
            <person name="Ota T."/>
            <person name="Suzuki Y."/>
            <person name="Nishikawa T."/>
            <person name="Otsuki T."/>
            <person name="Sugiyama T."/>
            <person name="Irie R."/>
            <person name="Wakamatsu A."/>
            <person name="Hayashi K."/>
            <person name="Sato H."/>
            <person name="Nagai K."/>
            <person name="Kimura K."/>
            <person name="Makita H."/>
            <person name="Sekine M."/>
            <person name="Obayashi M."/>
            <person name="Nishi T."/>
            <person name="Shibahara T."/>
            <person name="Tanaka T."/>
            <person name="Ishii S."/>
            <person name="Yamamoto J."/>
            <person name="Saito K."/>
            <person name="Kawai Y."/>
            <person name="Isono Y."/>
            <person name="Nakamura Y."/>
            <person name="Nagahari K."/>
            <person name="Murakami K."/>
            <person name="Yasuda T."/>
            <person name="Iwayanagi T."/>
            <person name="Wagatsuma M."/>
            <person name="Shiratori A."/>
            <person name="Sudo H."/>
            <person name="Hosoiri T."/>
            <person name="Kaku Y."/>
            <person name="Kodaira H."/>
            <person name="Kondo H."/>
            <person name="Sugawara M."/>
            <person name="Takahashi M."/>
            <person name="Kanda K."/>
            <person name="Yokoi T."/>
            <person name="Furuya T."/>
            <person name="Kikkawa E."/>
            <person name="Omura Y."/>
            <person name="Abe K."/>
            <person name="Kamihara K."/>
            <person name="Katsuta N."/>
            <person name="Sato K."/>
            <person name="Tanikawa M."/>
            <person name="Yamazaki M."/>
            <person name="Ninomiya K."/>
            <person name="Ishibashi T."/>
            <person name="Yamashita H."/>
            <person name="Murakawa K."/>
            <person name="Fujimori K."/>
            <person name="Tanai H."/>
            <person name="Kimata M."/>
            <person name="Watanabe M."/>
            <person name="Hiraoka S."/>
            <person name="Chiba Y."/>
            <person name="Ishida S."/>
            <person name="Ono Y."/>
            <person name="Takiguchi S."/>
            <person name="Watanabe S."/>
            <person name="Yosida M."/>
            <person name="Hotuta T."/>
            <person name="Kusano J."/>
            <person name="Kanehori K."/>
            <person name="Takahashi-Fujii A."/>
            <person name="Hara H."/>
            <person name="Tanase T.-O."/>
            <person name="Nomura Y."/>
            <person name="Togiya S."/>
            <person name="Komai F."/>
            <person name="Hara R."/>
            <person name="Takeuchi K."/>
            <person name="Arita M."/>
            <person name="Imose N."/>
            <person name="Musashino K."/>
            <person name="Yuuki H."/>
            <person name="Oshima A."/>
            <person name="Sasaki N."/>
            <person name="Aotsuka S."/>
            <person name="Yoshikawa Y."/>
            <person name="Matsunawa H."/>
            <person name="Ichihara T."/>
            <person name="Shiohata N."/>
            <person name="Sano S."/>
            <person name="Moriya S."/>
            <person name="Momiyama H."/>
            <person name="Satoh N."/>
            <person name="Takami S."/>
            <person name="Terashima Y."/>
            <person name="Suzuki O."/>
            <person name="Nakagawa S."/>
            <person name="Senoh A."/>
            <person name="Mizoguchi H."/>
            <person name="Goto Y."/>
            <person name="Shimizu F."/>
            <person name="Wakebe H."/>
            <person name="Hishigaki H."/>
            <person name="Watanabe T."/>
            <person name="Sugiyama A."/>
            <person name="Takemoto M."/>
            <person name="Kawakami B."/>
            <person name="Yamazaki M."/>
            <person name="Watanabe K."/>
            <person name="Kumagai A."/>
            <person name="Itakura S."/>
            <person name="Fukuzumi Y."/>
            <person name="Fujimori Y."/>
            <person name="Komiyama M."/>
            <person name="Tashiro H."/>
            <person name="Tanigami A."/>
            <person name="Fujiwara T."/>
            <person name="Ono T."/>
            <person name="Yamada K."/>
            <person name="Fujii Y."/>
            <person name="Ozaki K."/>
            <person name="Hirao M."/>
            <person name="Ohmori Y."/>
            <person name="Kawabata A."/>
            <person name="Hikiji T."/>
            <person name="Kobatake N."/>
            <person name="Inagaki H."/>
            <person name="Ikema Y."/>
            <person name="Okamoto S."/>
            <person name="Okitani R."/>
            <person name="Kawakami T."/>
            <person name="Noguchi S."/>
            <person name="Itoh T."/>
            <person name="Shigeta K."/>
            <person name="Senba T."/>
            <person name="Matsumura K."/>
            <person name="Nakajima Y."/>
            <person name="Mizuno T."/>
            <person name="Morinaga M."/>
            <person name="Sasaki M."/>
            <person name="Togashi T."/>
            <person name="Oyama M."/>
            <person name="Hata H."/>
            <person name="Watanabe M."/>
            <person name="Komatsu T."/>
            <person name="Mizushima-Sugano J."/>
            <person name="Satoh T."/>
            <person name="Shirai Y."/>
            <person name="Takahashi Y."/>
            <person name="Nakagawa K."/>
            <person name="Okumura K."/>
            <person name="Nagase T."/>
            <person name="Nomura N."/>
            <person name="Kikuchi H."/>
            <person name="Masuho Y."/>
            <person name="Yamashita R."/>
            <person name="Nakai K."/>
            <person name="Yada T."/>
            <person name="Nakamura Y."/>
            <person name="Ohara O."/>
            <person name="Isogai T."/>
            <person name="Sugano S."/>
        </authorList>
    </citation>
    <scope>NUCLEOTIDE SEQUENCE [LARGE SCALE MRNA] (ISOFORMS 1 AND 2)</scope>
    <source>
        <tissue>Embryo</tissue>
    </source>
</reference>
<reference key="4">
    <citation type="journal article" date="2003" name="Nature">
        <title>The DNA sequence and analysis of human chromosome 6.</title>
        <authorList>
            <person name="Mungall A.J."/>
            <person name="Palmer S.A."/>
            <person name="Sims S.K."/>
            <person name="Edwards C.A."/>
            <person name="Ashurst J.L."/>
            <person name="Wilming L."/>
            <person name="Jones M.C."/>
            <person name="Horton R."/>
            <person name="Hunt S.E."/>
            <person name="Scott C.E."/>
            <person name="Gilbert J.G.R."/>
            <person name="Clamp M.E."/>
            <person name="Bethel G."/>
            <person name="Milne S."/>
            <person name="Ainscough R."/>
            <person name="Almeida J.P."/>
            <person name="Ambrose K.D."/>
            <person name="Andrews T.D."/>
            <person name="Ashwell R.I.S."/>
            <person name="Babbage A.K."/>
            <person name="Bagguley C.L."/>
            <person name="Bailey J."/>
            <person name="Banerjee R."/>
            <person name="Barker D.J."/>
            <person name="Barlow K.F."/>
            <person name="Bates K."/>
            <person name="Beare D.M."/>
            <person name="Beasley H."/>
            <person name="Beasley O."/>
            <person name="Bird C.P."/>
            <person name="Blakey S.E."/>
            <person name="Bray-Allen S."/>
            <person name="Brook J."/>
            <person name="Brown A.J."/>
            <person name="Brown J.Y."/>
            <person name="Burford D.C."/>
            <person name="Burrill W."/>
            <person name="Burton J."/>
            <person name="Carder C."/>
            <person name="Carter N.P."/>
            <person name="Chapman J.C."/>
            <person name="Clark S.Y."/>
            <person name="Clark G."/>
            <person name="Clee C.M."/>
            <person name="Clegg S."/>
            <person name="Cobley V."/>
            <person name="Collier R.E."/>
            <person name="Collins J.E."/>
            <person name="Colman L.K."/>
            <person name="Corby N.R."/>
            <person name="Coville G.J."/>
            <person name="Culley K.M."/>
            <person name="Dhami P."/>
            <person name="Davies J."/>
            <person name="Dunn M."/>
            <person name="Earthrowl M.E."/>
            <person name="Ellington A.E."/>
            <person name="Evans K.A."/>
            <person name="Faulkner L."/>
            <person name="Francis M.D."/>
            <person name="Frankish A."/>
            <person name="Frankland J."/>
            <person name="French L."/>
            <person name="Garner P."/>
            <person name="Garnett J."/>
            <person name="Ghori M.J."/>
            <person name="Gilby L.M."/>
            <person name="Gillson C.J."/>
            <person name="Glithero R.J."/>
            <person name="Grafham D.V."/>
            <person name="Grant M."/>
            <person name="Gribble S."/>
            <person name="Griffiths C."/>
            <person name="Griffiths M.N.D."/>
            <person name="Hall R."/>
            <person name="Halls K.S."/>
            <person name="Hammond S."/>
            <person name="Harley J.L."/>
            <person name="Hart E.A."/>
            <person name="Heath P.D."/>
            <person name="Heathcott R."/>
            <person name="Holmes S.J."/>
            <person name="Howden P.J."/>
            <person name="Howe K.L."/>
            <person name="Howell G.R."/>
            <person name="Huckle E."/>
            <person name="Humphray S.J."/>
            <person name="Humphries M.D."/>
            <person name="Hunt A.R."/>
            <person name="Johnson C.M."/>
            <person name="Joy A.A."/>
            <person name="Kay M."/>
            <person name="Keenan S.J."/>
            <person name="Kimberley A.M."/>
            <person name="King A."/>
            <person name="Laird G.K."/>
            <person name="Langford C."/>
            <person name="Lawlor S."/>
            <person name="Leongamornlert D.A."/>
            <person name="Leversha M."/>
            <person name="Lloyd C.R."/>
            <person name="Lloyd D.M."/>
            <person name="Loveland J.E."/>
            <person name="Lovell J."/>
            <person name="Martin S."/>
            <person name="Mashreghi-Mohammadi M."/>
            <person name="Maslen G.L."/>
            <person name="Matthews L."/>
            <person name="McCann O.T."/>
            <person name="McLaren S.J."/>
            <person name="McLay K."/>
            <person name="McMurray A."/>
            <person name="Moore M.J.F."/>
            <person name="Mullikin J.C."/>
            <person name="Niblett D."/>
            <person name="Nickerson T."/>
            <person name="Novik K.L."/>
            <person name="Oliver K."/>
            <person name="Overton-Larty E.K."/>
            <person name="Parker A."/>
            <person name="Patel R."/>
            <person name="Pearce A.V."/>
            <person name="Peck A.I."/>
            <person name="Phillimore B.J.C.T."/>
            <person name="Phillips S."/>
            <person name="Plumb R.W."/>
            <person name="Porter K.M."/>
            <person name="Ramsey Y."/>
            <person name="Ranby S.A."/>
            <person name="Rice C.M."/>
            <person name="Ross M.T."/>
            <person name="Searle S.M."/>
            <person name="Sehra H.K."/>
            <person name="Sheridan E."/>
            <person name="Skuce C.D."/>
            <person name="Smith S."/>
            <person name="Smith M."/>
            <person name="Spraggon L."/>
            <person name="Squares S.L."/>
            <person name="Steward C.A."/>
            <person name="Sycamore N."/>
            <person name="Tamlyn-Hall G."/>
            <person name="Tester J."/>
            <person name="Theaker A.J."/>
            <person name="Thomas D.W."/>
            <person name="Thorpe A."/>
            <person name="Tracey A."/>
            <person name="Tromans A."/>
            <person name="Tubby B."/>
            <person name="Wall M."/>
            <person name="Wallis J.M."/>
            <person name="West A.P."/>
            <person name="White S.S."/>
            <person name="Whitehead S.L."/>
            <person name="Whittaker H."/>
            <person name="Wild A."/>
            <person name="Willey D.J."/>
            <person name="Wilmer T.E."/>
            <person name="Wood J.M."/>
            <person name="Wray P.W."/>
            <person name="Wyatt J.C."/>
            <person name="Young L."/>
            <person name="Younger R.M."/>
            <person name="Bentley D.R."/>
            <person name="Coulson A."/>
            <person name="Durbin R.M."/>
            <person name="Hubbard T."/>
            <person name="Sulston J.E."/>
            <person name="Dunham I."/>
            <person name="Rogers J."/>
            <person name="Beck S."/>
        </authorList>
    </citation>
    <scope>NUCLEOTIDE SEQUENCE [LARGE SCALE GENOMIC DNA]</scope>
</reference>
<reference key="5">
    <citation type="submission" date="2005-07" db="EMBL/GenBank/DDBJ databases">
        <authorList>
            <person name="Mural R.J."/>
            <person name="Istrail S."/>
            <person name="Sutton G.G."/>
            <person name="Florea L."/>
            <person name="Halpern A.L."/>
            <person name="Mobarry C.M."/>
            <person name="Lippert R."/>
            <person name="Walenz B."/>
            <person name="Shatkay H."/>
            <person name="Dew I."/>
            <person name="Miller J.R."/>
            <person name="Flanigan M.J."/>
            <person name="Edwards N.J."/>
            <person name="Bolanos R."/>
            <person name="Fasulo D."/>
            <person name="Halldorsson B.V."/>
            <person name="Hannenhalli S."/>
            <person name="Turner R."/>
            <person name="Yooseph S."/>
            <person name="Lu F."/>
            <person name="Nusskern D.R."/>
            <person name="Shue B.C."/>
            <person name="Zheng X.H."/>
            <person name="Zhong F."/>
            <person name="Delcher A.L."/>
            <person name="Huson D.H."/>
            <person name="Kravitz S.A."/>
            <person name="Mouchard L."/>
            <person name="Reinert K."/>
            <person name="Remington K.A."/>
            <person name="Clark A.G."/>
            <person name="Waterman M.S."/>
            <person name="Eichler E.E."/>
            <person name="Adams M.D."/>
            <person name="Hunkapiller M.W."/>
            <person name="Myers E.W."/>
            <person name="Venter J.C."/>
        </authorList>
    </citation>
    <scope>NUCLEOTIDE SEQUENCE [LARGE SCALE GENOMIC DNA]</scope>
</reference>
<reference key="6">
    <citation type="journal article" date="2004" name="Genome Res.">
        <title>The status, quality, and expansion of the NIH full-length cDNA project: the Mammalian Gene Collection (MGC).</title>
        <authorList>
            <consortium name="The MGC Project Team"/>
        </authorList>
    </citation>
    <scope>NUCLEOTIDE SEQUENCE [LARGE SCALE MRNA] (ISOFORM 1)</scope>
    <source>
        <tissue>Placenta</tissue>
    </source>
</reference>
<reference key="7">
    <citation type="journal article" date="2013" name="J. Proteome Res.">
        <title>Toward a comprehensive characterization of a human cancer cell phosphoproteome.</title>
        <authorList>
            <person name="Zhou H."/>
            <person name="Di Palma S."/>
            <person name="Preisinger C."/>
            <person name="Peng M."/>
            <person name="Polat A.N."/>
            <person name="Heck A.J."/>
            <person name="Mohammed S."/>
        </authorList>
    </citation>
    <scope>PHOSPHORYLATION [LARGE SCALE ANALYSIS] AT THR-480</scope>
    <scope>IDENTIFICATION BY MASS SPECTROMETRY [LARGE SCALE ANALYSIS]</scope>
    <source>
        <tissue>Cervix carcinoma</tissue>
    </source>
</reference>
<name>LRRC1_HUMAN</name>
<protein>
    <recommendedName>
        <fullName>Leucine-rich repeat-containing protein 1</fullName>
    </recommendedName>
    <alternativeName>
        <fullName>LANO adapter protein</fullName>
    </alternativeName>
    <alternativeName>
        <fullName>LAP and no PDZ protein</fullName>
    </alternativeName>
</protein>
<proteinExistence type="evidence at protein level"/>
<keyword id="KW-0025">Alternative splicing</keyword>
<keyword id="KW-0175">Coiled coil</keyword>
<keyword id="KW-0963">Cytoplasm</keyword>
<keyword id="KW-0433">Leucine-rich repeat</keyword>
<keyword id="KW-0472">Membrane</keyword>
<keyword id="KW-0597">Phosphoprotein</keyword>
<keyword id="KW-1267">Proteomics identification</keyword>
<keyword id="KW-1185">Reference proteome</keyword>
<keyword id="KW-0677">Repeat</keyword>
<feature type="chain" id="PRO_0000084489" description="Leucine-rich repeat-containing protein 1">
    <location>
        <begin position="1"/>
        <end position="524"/>
    </location>
</feature>
<feature type="repeat" description="LRR 1">
    <location>
        <begin position="11"/>
        <end position="34"/>
    </location>
</feature>
<feature type="repeat" description="LRR 2">
    <location>
        <begin position="35"/>
        <end position="58"/>
    </location>
</feature>
<feature type="repeat" description="LRR 3">
    <location>
        <begin position="60"/>
        <end position="81"/>
    </location>
</feature>
<feature type="repeat" description="LRR 4">
    <location>
        <begin position="83"/>
        <end position="105"/>
    </location>
</feature>
<feature type="repeat" description="LRR 5">
    <location>
        <begin position="107"/>
        <end position="126"/>
    </location>
</feature>
<feature type="repeat" description="LRR 6">
    <location>
        <begin position="127"/>
        <end position="149"/>
    </location>
</feature>
<feature type="repeat" description="LRR 7">
    <location>
        <begin position="150"/>
        <end position="172"/>
    </location>
</feature>
<feature type="repeat" description="LRR 8">
    <location>
        <begin position="173"/>
        <end position="196"/>
    </location>
</feature>
<feature type="repeat" description="LRR 9">
    <location>
        <begin position="198"/>
        <end position="218"/>
    </location>
</feature>
<feature type="repeat" description="LRR 10">
    <location>
        <begin position="219"/>
        <end position="242"/>
    </location>
</feature>
<feature type="repeat" description="LRR 11">
    <location>
        <begin position="244"/>
        <end position="264"/>
    </location>
</feature>
<feature type="repeat" description="LRR 12">
    <location>
        <begin position="265"/>
        <end position="288"/>
    </location>
</feature>
<feature type="repeat" description="LRR 13">
    <location>
        <begin position="290"/>
        <end position="310"/>
    </location>
</feature>
<feature type="repeat" description="LRR 14">
    <location>
        <begin position="311"/>
        <end position="334"/>
    </location>
</feature>
<feature type="repeat" description="LRR 15">
    <location>
        <begin position="336"/>
        <end position="356"/>
    </location>
</feature>
<feature type="repeat" description="LRR 16">
    <location>
        <begin position="357"/>
        <end position="380"/>
    </location>
</feature>
<feature type="repeat" description="LRR 17">
    <location>
        <begin position="382"/>
        <end position="405"/>
    </location>
</feature>
<feature type="coiled-coil region" evidence="1">
    <location>
        <begin position="484"/>
        <end position="512"/>
    </location>
</feature>
<feature type="modified residue" description="Phosphothreonine" evidence="6">
    <location>
        <position position="480"/>
    </location>
</feature>
<feature type="splice variant" id="VSP_010912" description="In isoform 2." evidence="4">
    <original>PESIGALL</original>
    <variation>NQLEPSYI</variation>
    <location>
        <begin position="190"/>
        <end position="197"/>
    </location>
</feature>
<feature type="splice variant" id="VSP_010913" description="In isoform 2." evidence="4">
    <location>
        <begin position="198"/>
        <end position="524"/>
    </location>
</feature>
<feature type="sequence variant" id="VAR_019431" description="In dbSNP:rs9349688." evidence="3">
    <original>I</original>
    <variation>V</variation>
    <location>
        <position position="193"/>
    </location>
</feature>
<sequence length="524" mass="59242">MFHCIPLWRCNRHVESIDKRHCSLVYVPEEIYRYARSLEELLLDANQLRELPEQFFQLVKLRKLGLSDNEIQRLPPEIANFMQLVELDVSRNEIPEIPESISFCKALQVADFSGNPLTRLPESFPELQNLTCLSVNDISLQSLPENIGNLYNLASLELRENLLTYLPDSLTQLRRLEELDLGNNEIYNLPESIGALLHLKDLWLDGNQLSELPQEIGNLKNLLCLDVSENRLERLPEEISGLTSLTDLVISQNLLETIPDGIGKLKKLSILKVDQNRLTQLPEAVGECESLTELVLTENQLLTLPKSIGKLKKLSNLNADRNKLVSLPKEIGGCCSLTVFCVRDNRLTRIPAEVSQATELHVLDVAGNRLLHLPLSLTALKLKALWLSDNQSQPLLTFQTDTDYTTGEKILTCVLLPQLPSEPTCQENLPRCGALENLVNDVSDEAWNERAVNRVSAIRFVEDEKDEEDNETRTLLRRATPHPGELKHMKKTVENLRNDMNAAKGLDSNKNEVNHAIDRVTTSV</sequence>
<gene>
    <name type="primary">LRRC1</name>
    <name type="synonym">LANO</name>
</gene>
<dbReference type="EMBL" id="AF359380">
    <property type="protein sequence ID" value="AAK72246.1"/>
    <property type="molecule type" value="mRNA"/>
</dbReference>
<dbReference type="EMBL" id="AF332199">
    <property type="protein sequence ID" value="AAK69623.1"/>
    <property type="molecule type" value="mRNA"/>
</dbReference>
<dbReference type="EMBL" id="AK021896">
    <property type="protein sequence ID" value="BAB13929.1"/>
    <property type="molecule type" value="mRNA"/>
</dbReference>
<dbReference type="EMBL" id="AK001637">
    <property type="protein sequence ID" value="BAA91801.1"/>
    <property type="status" value="ALT_FRAME"/>
    <property type="molecule type" value="mRNA"/>
</dbReference>
<dbReference type="EMBL" id="AL513211">
    <property type="status" value="NOT_ANNOTATED_CDS"/>
    <property type="molecule type" value="Genomic_DNA"/>
</dbReference>
<dbReference type="EMBL" id="AL033384">
    <property type="status" value="NOT_ANNOTATED_CDS"/>
    <property type="molecule type" value="Genomic_DNA"/>
</dbReference>
<dbReference type="EMBL" id="CH471081">
    <property type="protein sequence ID" value="EAX04430.1"/>
    <property type="molecule type" value="Genomic_DNA"/>
</dbReference>
<dbReference type="EMBL" id="BC003193">
    <property type="protein sequence ID" value="AAH03193.1"/>
    <property type="molecule type" value="mRNA"/>
</dbReference>
<dbReference type="CCDS" id="CCDS4953.2">
    <molecule id="Q9BTT6-1"/>
</dbReference>
<dbReference type="RefSeq" id="NP_060684.4">
    <molecule id="Q9BTT6-1"/>
    <property type="nucleotide sequence ID" value="NM_018214.4"/>
</dbReference>
<dbReference type="RefSeq" id="XP_011513028.1">
    <property type="nucleotide sequence ID" value="XM_011514726.2"/>
</dbReference>
<dbReference type="SMR" id="Q9BTT6"/>
<dbReference type="BioGRID" id="120522">
    <property type="interactions" value="100"/>
</dbReference>
<dbReference type="FunCoup" id="Q9BTT6">
    <property type="interactions" value="1019"/>
</dbReference>
<dbReference type="IntAct" id="Q9BTT6">
    <property type="interactions" value="60"/>
</dbReference>
<dbReference type="MINT" id="Q9BTT6"/>
<dbReference type="STRING" id="9606.ENSP00000359925"/>
<dbReference type="GlyGen" id="Q9BTT6">
    <property type="glycosylation" value="1 site, 1 O-linked glycan (1 site)"/>
</dbReference>
<dbReference type="iPTMnet" id="Q9BTT6"/>
<dbReference type="PhosphoSitePlus" id="Q9BTT6"/>
<dbReference type="SwissPalm" id="Q9BTT6"/>
<dbReference type="BioMuta" id="LRRC1"/>
<dbReference type="DMDM" id="50401149"/>
<dbReference type="jPOST" id="Q9BTT6"/>
<dbReference type="MassIVE" id="Q9BTT6"/>
<dbReference type="PaxDb" id="9606-ENSP00000359925"/>
<dbReference type="PeptideAtlas" id="Q9BTT6"/>
<dbReference type="ProteomicsDB" id="79009">
    <molecule id="Q9BTT6-1"/>
</dbReference>
<dbReference type="ProteomicsDB" id="79010">
    <molecule id="Q9BTT6-2"/>
</dbReference>
<dbReference type="Pumba" id="Q9BTT6"/>
<dbReference type="Antibodypedia" id="17278">
    <property type="antibodies" value="87 antibodies from 26 providers"/>
</dbReference>
<dbReference type="DNASU" id="55227"/>
<dbReference type="Ensembl" id="ENST00000370888.6">
    <molecule id="Q9BTT6-1"/>
    <property type="protein sequence ID" value="ENSP00000359925.1"/>
    <property type="gene ID" value="ENSG00000137269.15"/>
</dbReference>
<dbReference type="Ensembl" id="ENST00000487251.5">
    <molecule id="Q9BTT6-2"/>
    <property type="protein sequence ID" value="ENSP00000435217.1"/>
    <property type="gene ID" value="ENSG00000137269.15"/>
</dbReference>
<dbReference type="GeneID" id="55227"/>
<dbReference type="KEGG" id="hsa:55227"/>
<dbReference type="MANE-Select" id="ENST00000370888.6">
    <property type="protein sequence ID" value="ENSP00000359925.1"/>
    <property type="RefSeq nucleotide sequence ID" value="NM_018214.5"/>
    <property type="RefSeq protein sequence ID" value="NP_060684.4"/>
</dbReference>
<dbReference type="UCSC" id="uc003pcd.2">
    <molecule id="Q9BTT6-1"/>
    <property type="organism name" value="human"/>
</dbReference>
<dbReference type="AGR" id="HGNC:14307"/>
<dbReference type="CTD" id="55227"/>
<dbReference type="DisGeNET" id="55227"/>
<dbReference type="GeneCards" id="LRRC1"/>
<dbReference type="HGNC" id="HGNC:14307">
    <property type="gene designation" value="LRRC1"/>
</dbReference>
<dbReference type="HPA" id="ENSG00000137269">
    <property type="expression patterns" value="Low tissue specificity"/>
</dbReference>
<dbReference type="MIM" id="608195">
    <property type="type" value="gene"/>
</dbReference>
<dbReference type="neXtProt" id="NX_Q9BTT6"/>
<dbReference type="OpenTargets" id="ENSG00000137269"/>
<dbReference type="PharmGKB" id="PA30460"/>
<dbReference type="VEuPathDB" id="HostDB:ENSG00000137269"/>
<dbReference type="eggNOG" id="KOG0619">
    <property type="taxonomic scope" value="Eukaryota"/>
</dbReference>
<dbReference type="GeneTree" id="ENSGT00940000154025"/>
<dbReference type="HOGENOM" id="CLU_000288_18_15_1"/>
<dbReference type="InParanoid" id="Q9BTT6"/>
<dbReference type="OMA" id="VIDKRHC"/>
<dbReference type="OrthoDB" id="676979at2759"/>
<dbReference type="PAN-GO" id="Q9BTT6">
    <property type="GO annotations" value="0 GO annotations based on evolutionary models"/>
</dbReference>
<dbReference type="PhylomeDB" id="Q9BTT6"/>
<dbReference type="TreeFam" id="TF351429"/>
<dbReference type="PathwayCommons" id="Q9BTT6"/>
<dbReference type="Reactome" id="R-HSA-9696270">
    <property type="pathway name" value="RND2 GTPase cycle"/>
</dbReference>
<dbReference type="SignaLink" id="Q9BTT6"/>
<dbReference type="BioGRID-ORCS" id="55227">
    <property type="hits" value="38 hits in 1151 CRISPR screens"/>
</dbReference>
<dbReference type="ChiTaRS" id="LRRC1">
    <property type="organism name" value="human"/>
</dbReference>
<dbReference type="GenomeRNAi" id="55227"/>
<dbReference type="Pharos" id="Q9BTT6">
    <property type="development level" value="Tbio"/>
</dbReference>
<dbReference type="PRO" id="PR:Q9BTT6"/>
<dbReference type="Proteomes" id="UP000005640">
    <property type="component" value="Chromosome 6"/>
</dbReference>
<dbReference type="RNAct" id="Q9BTT6">
    <property type="molecule type" value="protein"/>
</dbReference>
<dbReference type="Bgee" id="ENSG00000137269">
    <property type="expression patterns" value="Expressed in tibia and 184 other cell types or tissues"/>
</dbReference>
<dbReference type="ExpressionAtlas" id="Q9BTT6">
    <property type="expression patterns" value="baseline and differential"/>
</dbReference>
<dbReference type="GO" id="GO:0005737">
    <property type="term" value="C:cytoplasm"/>
    <property type="evidence" value="ECO:0000318"/>
    <property type="project" value="GO_Central"/>
</dbReference>
<dbReference type="GO" id="GO:0005829">
    <property type="term" value="C:cytosol"/>
    <property type="evidence" value="ECO:0000314"/>
    <property type="project" value="HPA"/>
</dbReference>
<dbReference type="GO" id="GO:0016020">
    <property type="term" value="C:membrane"/>
    <property type="evidence" value="ECO:0007669"/>
    <property type="project" value="UniProtKB-SubCell"/>
</dbReference>
<dbReference type="FunFam" id="3.80.10.10:FF:000346">
    <property type="entry name" value="Leucine rich repeat containing 1"/>
    <property type="match status" value="1"/>
</dbReference>
<dbReference type="FunFam" id="3.80.10.10:FF:000480">
    <property type="entry name" value="Leucine rich repeat containing 1"/>
    <property type="match status" value="1"/>
</dbReference>
<dbReference type="FunFam" id="3.80.10.10:FF:000490">
    <property type="entry name" value="Leucine rich repeat containing 1"/>
    <property type="match status" value="1"/>
</dbReference>
<dbReference type="Gene3D" id="3.80.10.10">
    <property type="entry name" value="Ribonuclease Inhibitor"/>
    <property type="match status" value="3"/>
</dbReference>
<dbReference type="InterPro" id="IPR001611">
    <property type="entry name" value="Leu-rich_rpt"/>
</dbReference>
<dbReference type="InterPro" id="IPR003591">
    <property type="entry name" value="Leu-rich_rpt_typical-subtyp"/>
</dbReference>
<dbReference type="InterPro" id="IPR032675">
    <property type="entry name" value="LRR_dom_sf"/>
</dbReference>
<dbReference type="InterPro" id="IPR055414">
    <property type="entry name" value="LRR_R13L4/SHOC2-like"/>
</dbReference>
<dbReference type="InterPro" id="IPR050614">
    <property type="entry name" value="Synaptic_Scaffolding_LAP-MAGUK"/>
</dbReference>
<dbReference type="PANTHER" id="PTHR23119">
    <property type="entry name" value="DISCS LARGE"/>
    <property type="match status" value="1"/>
</dbReference>
<dbReference type="PANTHER" id="PTHR23119:SF58">
    <property type="entry name" value="LEUCINE RICH REPEAT CONTAINING 1"/>
    <property type="match status" value="1"/>
</dbReference>
<dbReference type="Pfam" id="PF23598">
    <property type="entry name" value="LRR_14"/>
    <property type="match status" value="1"/>
</dbReference>
<dbReference type="Pfam" id="PF13855">
    <property type="entry name" value="LRR_8"/>
    <property type="match status" value="1"/>
</dbReference>
<dbReference type="SMART" id="SM00364">
    <property type="entry name" value="LRR_BAC"/>
    <property type="match status" value="14"/>
</dbReference>
<dbReference type="SMART" id="SM00369">
    <property type="entry name" value="LRR_TYP"/>
    <property type="match status" value="13"/>
</dbReference>
<dbReference type="SUPFAM" id="SSF52058">
    <property type="entry name" value="L domain-like"/>
    <property type="match status" value="2"/>
</dbReference>
<dbReference type="PROSITE" id="PS51450">
    <property type="entry name" value="LRR"/>
    <property type="match status" value="16"/>
</dbReference>
<accession>Q9BTT6</accession>
<accession>Q5TGN3</accession>
<accession>Q9HAC0</accession>
<accession>Q9NVF1</accession>